<sequence length="300" mass="32978">MIKTIQKELEGLDIRFDEPLKKYTYTKVGGPADYLAFPRNRLELSRIVKFANSQNIPWMVLGNASNIIVRDGGIRGFVIMFDKLSTVTVNGYVIEAEAGANLIETTRIARYHSLTGFEFACGIPGSVGGAVFMNAGAYGGEIAHILLSAQVLTPQGELKTIEARNMQFGYRHSVIQESGDIVISAKFALKPGDHLMITQEMDRLTYLRELKQPLEYPSCGSVFKRPPGHFAGQLISEAHLKGQRIGGVEVSQKHAGFMVNIAEGSAQDYENLIEHVINTVESTSGVHLEPEVRIIGESLL</sequence>
<evidence type="ECO:0000255" key="1">
    <source>
        <dbReference type="HAMAP-Rule" id="MF_00037"/>
    </source>
</evidence>
<dbReference type="EC" id="1.3.1.98" evidence="1"/>
<dbReference type="EMBL" id="AE009948">
    <property type="protein sequence ID" value="AAM99993.1"/>
    <property type="molecule type" value="Genomic_DNA"/>
</dbReference>
<dbReference type="RefSeq" id="NP_688121.1">
    <property type="nucleotide sequence ID" value="NC_004116.1"/>
</dbReference>
<dbReference type="RefSeq" id="WP_000598027.1">
    <property type="nucleotide sequence ID" value="NC_004116.1"/>
</dbReference>
<dbReference type="SMR" id="P65465"/>
<dbReference type="STRING" id="208435.SAG1112"/>
<dbReference type="GeneID" id="66886037"/>
<dbReference type="KEGG" id="sag:SAG1112"/>
<dbReference type="PATRIC" id="fig|208435.3.peg.1120"/>
<dbReference type="HOGENOM" id="CLU_035304_1_1_9"/>
<dbReference type="OrthoDB" id="9804753at2"/>
<dbReference type="UniPathway" id="UPA00219"/>
<dbReference type="Proteomes" id="UP000000821">
    <property type="component" value="Chromosome"/>
</dbReference>
<dbReference type="GO" id="GO:0005829">
    <property type="term" value="C:cytosol"/>
    <property type="evidence" value="ECO:0007669"/>
    <property type="project" value="TreeGrafter"/>
</dbReference>
<dbReference type="GO" id="GO:0071949">
    <property type="term" value="F:FAD binding"/>
    <property type="evidence" value="ECO:0007669"/>
    <property type="project" value="InterPro"/>
</dbReference>
<dbReference type="GO" id="GO:0008762">
    <property type="term" value="F:UDP-N-acetylmuramate dehydrogenase activity"/>
    <property type="evidence" value="ECO:0007669"/>
    <property type="project" value="UniProtKB-UniRule"/>
</dbReference>
<dbReference type="GO" id="GO:0051301">
    <property type="term" value="P:cell division"/>
    <property type="evidence" value="ECO:0007669"/>
    <property type="project" value="UniProtKB-KW"/>
</dbReference>
<dbReference type="GO" id="GO:0071555">
    <property type="term" value="P:cell wall organization"/>
    <property type="evidence" value="ECO:0007669"/>
    <property type="project" value="UniProtKB-KW"/>
</dbReference>
<dbReference type="GO" id="GO:0009252">
    <property type="term" value="P:peptidoglycan biosynthetic process"/>
    <property type="evidence" value="ECO:0007669"/>
    <property type="project" value="UniProtKB-UniRule"/>
</dbReference>
<dbReference type="GO" id="GO:0008360">
    <property type="term" value="P:regulation of cell shape"/>
    <property type="evidence" value="ECO:0007669"/>
    <property type="project" value="UniProtKB-KW"/>
</dbReference>
<dbReference type="Gene3D" id="3.30.465.10">
    <property type="match status" value="1"/>
</dbReference>
<dbReference type="Gene3D" id="3.90.78.10">
    <property type="entry name" value="UDP-N-acetylenolpyruvoylglucosamine reductase, C-terminal domain"/>
    <property type="match status" value="1"/>
</dbReference>
<dbReference type="Gene3D" id="3.30.43.10">
    <property type="entry name" value="Uridine Diphospho-n-acetylenolpyruvylglucosamine Reductase, domain 2"/>
    <property type="match status" value="1"/>
</dbReference>
<dbReference type="HAMAP" id="MF_00037">
    <property type="entry name" value="MurB"/>
    <property type="match status" value="1"/>
</dbReference>
<dbReference type="InterPro" id="IPR016166">
    <property type="entry name" value="FAD-bd_PCMH"/>
</dbReference>
<dbReference type="InterPro" id="IPR036318">
    <property type="entry name" value="FAD-bd_PCMH-like_sf"/>
</dbReference>
<dbReference type="InterPro" id="IPR016167">
    <property type="entry name" value="FAD-bd_PCMH_sub1"/>
</dbReference>
<dbReference type="InterPro" id="IPR016169">
    <property type="entry name" value="FAD-bd_PCMH_sub2"/>
</dbReference>
<dbReference type="InterPro" id="IPR003170">
    <property type="entry name" value="MurB"/>
</dbReference>
<dbReference type="InterPro" id="IPR011601">
    <property type="entry name" value="MurB_C"/>
</dbReference>
<dbReference type="InterPro" id="IPR036635">
    <property type="entry name" value="MurB_C_sf"/>
</dbReference>
<dbReference type="InterPro" id="IPR006094">
    <property type="entry name" value="Oxid_FAD_bind_N"/>
</dbReference>
<dbReference type="NCBIfam" id="TIGR00179">
    <property type="entry name" value="murB"/>
    <property type="match status" value="1"/>
</dbReference>
<dbReference type="NCBIfam" id="NF010480">
    <property type="entry name" value="PRK13905.1"/>
    <property type="match status" value="1"/>
</dbReference>
<dbReference type="PANTHER" id="PTHR21071">
    <property type="entry name" value="UDP-N-ACETYLENOLPYRUVOYLGLUCOSAMINE REDUCTASE"/>
    <property type="match status" value="1"/>
</dbReference>
<dbReference type="PANTHER" id="PTHR21071:SF4">
    <property type="entry name" value="UDP-N-ACETYLENOLPYRUVOYLGLUCOSAMINE REDUCTASE"/>
    <property type="match status" value="1"/>
</dbReference>
<dbReference type="Pfam" id="PF01565">
    <property type="entry name" value="FAD_binding_4"/>
    <property type="match status" value="1"/>
</dbReference>
<dbReference type="Pfam" id="PF02873">
    <property type="entry name" value="MurB_C"/>
    <property type="match status" value="1"/>
</dbReference>
<dbReference type="SUPFAM" id="SSF56176">
    <property type="entry name" value="FAD-binding/transporter-associated domain-like"/>
    <property type="match status" value="1"/>
</dbReference>
<dbReference type="SUPFAM" id="SSF56194">
    <property type="entry name" value="Uridine diphospho-N-Acetylenolpyruvylglucosamine reductase, MurB, C-terminal domain"/>
    <property type="match status" value="1"/>
</dbReference>
<dbReference type="PROSITE" id="PS51387">
    <property type="entry name" value="FAD_PCMH"/>
    <property type="match status" value="1"/>
</dbReference>
<name>MURB_STRA5</name>
<comment type="function">
    <text evidence="1">Cell wall formation.</text>
</comment>
<comment type="catalytic activity">
    <reaction evidence="1">
        <text>UDP-N-acetyl-alpha-D-muramate + NADP(+) = UDP-N-acetyl-3-O-(1-carboxyvinyl)-alpha-D-glucosamine + NADPH + H(+)</text>
        <dbReference type="Rhea" id="RHEA:12248"/>
        <dbReference type="ChEBI" id="CHEBI:15378"/>
        <dbReference type="ChEBI" id="CHEBI:57783"/>
        <dbReference type="ChEBI" id="CHEBI:58349"/>
        <dbReference type="ChEBI" id="CHEBI:68483"/>
        <dbReference type="ChEBI" id="CHEBI:70757"/>
        <dbReference type="EC" id="1.3.1.98"/>
    </reaction>
</comment>
<comment type="cofactor">
    <cofactor evidence="1">
        <name>FAD</name>
        <dbReference type="ChEBI" id="CHEBI:57692"/>
    </cofactor>
</comment>
<comment type="pathway">
    <text evidence="1">Cell wall biogenesis; peptidoglycan biosynthesis.</text>
</comment>
<comment type="subcellular location">
    <subcellularLocation>
        <location evidence="1">Cytoplasm</location>
    </subcellularLocation>
</comment>
<comment type="similarity">
    <text evidence="1">Belongs to the MurB family.</text>
</comment>
<gene>
    <name evidence="1" type="primary">murB</name>
    <name type="ordered locus">SAG1112</name>
</gene>
<reference key="1">
    <citation type="journal article" date="2002" name="Proc. Natl. Acad. Sci. U.S.A.">
        <title>Complete genome sequence and comparative genomic analysis of an emerging human pathogen, serotype V Streptococcus agalactiae.</title>
        <authorList>
            <person name="Tettelin H."/>
            <person name="Masignani V."/>
            <person name="Cieslewicz M.J."/>
            <person name="Eisen J.A."/>
            <person name="Peterson S.N."/>
            <person name="Wessels M.R."/>
            <person name="Paulsen I.T."/>
            <person name="Nelson K.E."/>
            <person name="Margarit I."/>
            <person name="Read T.D."/>
            <person name="Madoff L.C."/>
            <person name="Wolf A.M."/>
            <person name="Beanan M.J."/>
            <person name="Brinkac L.M."/>
            <person name="Daugherty S.C."/>
            <person name="DeBoy R.T."/>
            <person name="Durkin A.S."/>
            <person name="Kolonay J.F."/>
            <person name="Madupu R."/>
            <person name="Lewis M.R."/>
            <person name="Radune D."/>
            <person name="Fedorova N.B."/>
            <person name="Scanlan D."/>
            <person name="Khouri H.M."/>
            <person name="Mulligan S."/>
            <person name="Carty H.A."/>
            <person name="Cline R.T."/>
            <person name="Van Aken S.E."/>
            <person name="Gill J."/>
            <person name="Scarselli M."/>
            <person name="Mora M."/>
            <person name="Iacobini E.T."/>
            <person name="Brettoni C."/>
            <person name="Galli G."/>
            <person name="Mariani M."/>
            <person name="Vegni F."/>
            <person name="Maione D."/>
            <person name="Rinaudo D."/>
            <person name="Rappuoli R."/>
            <person name="Telford J.L."/>
            <person name="Kasper D.L."/>
            <person name="Grandi G."/>
            <person name="Fraser C.M."/>
        </authorList>
    </citation>
    <scope>NUCLEOTIDE SEQUENCE [LARGE SCALE GENOMIC DNA]</scope>
    <source>
        <strain>ATCC BAA-611 / 2603 V/R</strain>
    </source>
</reference>
<proteinExistence type="inferred from homology"/>
<organism>
    <name type="scientific">Streptococcus agalactiae serotype V (strain ATCC BAA-611 / 2603 V/R)</name>
    <dbReference type="NCBI Taxonomy" id="208435"/>
    <lineage>
        <taxon>Bacteria</taxon>
        <taxon>Bacillati</taxon>
        <taxon>Bacillota</taxon>
        <taxon>Bacilli</taxon>
        <taxon>Lactobacillales</taxon>
        <taxon>Streptococcaceae</taxon>
        <taxon>Streptococcus</taxon>
    </lineage>
</organism>
<protein>
    <recommendedName>
        <fullName evidence="1">UDP-N-acetylenolpyruvoylglucosamine reductase</fullName>
        <ecNumber evidence="1">1.3.1.98</ecNumber>
    </recommendedName>
    <alternativeName>
        <fullName evidence="1">UDP-N-acetylmuramate dehydrogenase</fullName>
    </alternativeName>
</protein>
<keyword id="KW-0131">Cell cycle</keyword>
<keyword id="KW-0132">Cell division</keyword>
<keyword id="KW-0133">Cell shape</keyword>
<keyword id="KW-0961">Cell wall biogenesis/degradation</keyword>
<keyword id="KW-0963">Cytoplasm</keyword>
<keyword id="KW-0274">FAD</keyword>
<keyword id="KW-0285">Flavoprotein</keyword>
<keyword id="KW-0521">NADP</keyword>
<keyword id="KW-0560">Oxidoreductase</keyword>
<keyword id="KW-0573">Peptidoglycan synthesis</keyword>
<keyword id="KW-1185">Reference proteome</keyword>
<accession>P65465</accession>
<accession>Q8DZI9</accession>
<accession>Q8E553</accession>
<feature type="chain" id="PRO_0000179266" description="UDP-N-acetylenolpyruvoylglucosamine reductase">
    <location>
        <begin position="1"/>
        <end position="300"/>
    </location>
</feature>
<feature type="domain" description="FAD-binding PCMH-type" evidence="1">
    <location>
        <begin position="27"/>
        <end position="192"/>
    </location>
</feature>
<feature type="active site" evidence="1">
    <location>
        <position position="171"/>
    </location>
</feature>
<feature type="active site" description="Proton donor" evidence="1">
    <location>
        <position position="221"/>
    </location>
</feature>
<feature type="active site" evidence="1">
    <location>
        <position position="291"/>
    </location>
</feature>